<gene>
    <name evidence="1" type="primary">lsrF</name>
    <name type="ordered locus">SPA3921</name>
</gene>
<name>LSRF_SALPA</name>
<evidence type="ECO:0000255" key="1">
    <source>
        <dbReference type="HAMAP-Rule" id="MF_02052"/>
    </source>
</evidence>
<comment type="function">
    <text evidence="1">Involved in the degradation of phospho-AI-2, thereby terminating induction of the lsr operon and closing the AI-2 signaling cycle. Catalyzes the transfer of an acetyl moiety from 3-hydroxy-5-phosphonooxypentane-2,4-dione to CoA to form glycerone phosphate and acetyl-CoA.</text>
</comment>
<comment type="catalytic activity">
    <reaction evidence="1">
        <text>dihydroxyacetone phosphate + acetyl-CoA = 3-hydroxy-2,4-dioxopentyl phosphate + CoA</text>
        <dbReference type="Rhea" id="RHEA:44736"/>
        <dbReference type="ChEBI" id="CHEBI:57287"/>
        <dbReference type="ChEBI" id="CHEBI:57288"/>
        <dbReference type="ChEBI" id="CHEBI:57642"/>
        <dbReference type="ChEBI" id="CHEBI:84359"/>
        <dbReference type="EC" id="2.3.1.245"/>
    </reaction>
</comment>
<comment type="subunit">
    <text evidence="1">Homodecamer.</text>
</comment>
<comment type="subcellular location">
    <subcellularLocation>
        <location evidence="1">Cytoplasm</location>
    </subcellularLocation>
</comment>
<comment type="similarity">
    <text evidence="1">Belongs to the DeoC/FbaB aldolase family.</text>
</comment>
<protein>
    <recommendedName>
        <fullName evidence="1">3-hydroxy-5-phosphonooxypentane-2,4-dione thiolase</fullName>
        <ecNumber evidence="1">2.3.1.245</ecNumber>
    </recommendedName>
</protein>
<organism>
    <name type="scientific">Salmonella paratyphi A (strain ATCC 9150 / SARB42)</name>
    <dbReference type="NCBI Taxonomy" id="295319"/>
    <lineage>
        <taxon>Bacteria</taxon>
        <taxon>Pseudomonadati</taxon>
        <taxon>Pseudomonadota</taxon>
        <taxon>Gammaproteobacteria</taxon>
        <taxon>Enterobacterales</taxon>
        <taxon>Enterobacteriaceae</taxon>
        <taxon>Salmonella</taxon>
    </lineage>
</organism>
<reference key="1">
    <citation type="journal article" date="2004" name="Nat. Genet.">
        <title>Comparison of genome degradation in Paratyphi A and Typhi, human-restricted serovars of Salmonella enterica that cause typhoid.</title>
        <authorList>
            <person name="McClelland M."/>
            <person name="Sanderson K.E."/>
            <person name="Clifton S.W."/>
            <person name="Latreille P."/>
            <person name="Porwollik S."/>
            <person name="Sabo A."/>
            <person name="Meyer R."/>
            <person name="Bieri T."/>
            <person name="Ozersky P."/>
            <person name="McLellan M."/>
            <person name="Harkins C.R."/>
            <person name="Wang C."/>
            <person name="Nguyen C."/>
            <person name="Berghoff A."/>
            <person name="Elliott G."/>
            <person name="Kohlberg S."/>
            <person name="Strong C."/>
            <person name="Du F."/>
            <person name="Carter J."/>
            <person name="Kremizki C."/>
            <person name="Layman D."/>
            <person name="Leonard S."/>
            <person name="Sun H."/>
            <person name="Fulton L."/>
            <person name="Nash W."/>
            <person name="Miner T."/>
            <person name="Minx P."/>
            <person name="Delehaunty K."/>
            <person name="Fronick C."/>
            <person name="Magrini V."/>
            <person name="Nhan M."/>
            <person name="Warren W."/>
            <person name="Florea L."/>
            <person name="Spieth J."/>
            <person name="Wilson R.K."/>
        </authorList>
    </citation>
    <scope>NUCLEOTIDE SEQUENCE [LARGE SCALE GENOMIC DNA]</scope>
    <source>
        <strain>ATCC 9150 / SARB42</strain>
    </source>
</reference>
<keyword id="KW-0963">Cytoplasm</keyword>
<keyword id="KW-0704">Schiff base</keyword>
<keyword id="KW-0808">Transferase</keyword>
<accession>Q5PJE3</accession>
<proteinExistence type="inferred from homology"/>
<dbReference type="EC" id="2.3.1.245" evidence="1"/>
<dbReference type="EMBL" id="CP000026">
    <property type="protein sequence ID" value="AAV79686.1"/>
    <property type="molecule type" value="Genomic_DNA"/>
</dbReference>
<dbReference type="RefSeq" id="WP_000774146.1">
    <property type="nucleotide sequence ID" value="NC_006511.1"/>
</dbReference>
<dbReference type="SMR" id="Q5PJE3"/>
<dbReference type="KEGG" id="spt:SPA3921"/>
<dbReference type="HOGENOM" id="CLU_057069_1_0_6"/>
<dbReference type="Proteomes" id="UP000008185">
    <property type="component" value="Chromosome"/>
</dbReference>
<dbReference type="GO" id="GO:0005737">
    <property type="term" value="C:cytoplasm"/>
    <property type="evidence" value="ECO:0007669"/>
    <property type="project" value="UniProtKB-SubCell"/>
</dbReference>
<dbReference type="GO" id="GO:0016747">
    <property type="term" value="F:acyltransferase activity, transferring groups other than amino-acyl groups"/>
    <property type="evidence" value="ECO:0007669"/>
    <property type="project" value="UniProtKB-UniRule"/>
</dbReference>
<dbReference type="GO" id="GO:0004332">
    <property type="term" value="F:fructose-bisphosphate aldolase activity"/>
    <property type="evidence" value="ECO:0007669"/>
    <property type="project" value="InterPro"/>
</dbReference>
<dbReference type="CDD" id="cd00958">
    <property type="entry name" value="DhnA"/>
    <property type="match status" value="1"/>
</dbReference>
<dbReference type="Gene3D" id="3.20.20.70">
    <property type="entry name" value="Aldolase class I"/>
    <property type="match status" value="1"/>
</dbReference>
<dbReference type="HAMAP" id="MF_02052">
    <property type="entry name" value="LsrF"/>
    <property type="match status" value="1"/>
</dbReference>
<dbReference type="InterPro" id="IPR013785">
    <property type="entry name" value="Aldolase_TIM"/>
</dbReference>
<dbReference type="InterPro" id="IPR002915">
    <property type="entry name" value="DeoC/FbaB/LacD_aldolase"/>
</dbReference>
<dbReference type="InterPro" id="IPR050456">
    <property type="entry name" value="DeoC/FbaB_aldolase"/>
</dbReference>
<dbReference type="InterPro" id="IPR041720">
    <property type="entry name" value="FbaB-like"/>
</dbReference>
<dbReference type="InterPro" id="IPR033673">
    <property type="entry name" value="LsrF"/>
</dbReference>
<dbReference type="NCBIfam" id="NF006081">
    <property type="entry name" value="PRK08227.1"/>
    <property type="match status" value="1"/>
</dbReference>
<dbReference type="PANTHER" id="PTHR47916:SF1">
    <property type="entry name" value="3-HYDROXY-5-PHOSPHONOOXYPENTANE-2,4-DIONE THIOLASE"/>
    <property type="match status" value="1"/>
</dbReference>
<dbReference type="PANTHER" id="PTHR47916">
    <property type="entry name" value="FRUCTOSE-BISPHOSPHATE ALDOLASE CLASS 1"/>
    <property type="match status" value="1"/>
</dbReference>
<dbReference type="Pfam" id="PF01791">
    <property type="entry name" value="DeoC"/>
    <property type="match status" value="1"/>
</dbReference>
<dbReference type="PIRSF" id="PIRSF038992">
    <property type="entry name" value="Aldolase_Ia"/>
    <property type="match status" value="1"/>
</dbReference>
<dbReference type="SMART" id="SM01133">
    <property type="entry name" value="DeoC"/>
    <property type="match status" value="1"/>
</dbReference>
<dbReference type="SUPFAM" id="SSF51569">
    <property type="entry name" value="Aldolase"/>
    <property type="match status" value="1"/>
</dbReference>
<feature type="chain" id="PRO_0000351527" description="3-hydroxy-5-phosphonooxypentane-2,4-dione thiolase">
    <location>
        <begin position="1"/>
        <end position="291"/>
    </location>
</feature>
<feature type="active site" description="Schiff-base intermediate with substrate" evidence="1">
    <location>
        <position position="203"/>
    </location>
</feature>
<sequence>MADLDDIKDGKDFHTDKPQTNTLFALKGCGALDWGMQSRLARIFNPKTRKTVMLAFDHGYFQGPTTGLERIDINIAPLFEYADVLMCTRGILRSVVPPAINKPVVLRASGANSILTELSNEAVAVAMDDAVRLNSCAAAAQVYIGSEHEHQSIKNIIQLIDAGLRVGMPIMAVTGVGKDMARDQRYFSLATRIAAEMGAQIIKTYYVDKGFERIAAGCPVPIVIAGGKKLPEREALEMCYQAIDQGASGVDMGRNIFQSEDPVAMIKAVHAVVHHNETAERAYELFLSEKG</sequence>